<reference key="1">
    <citation type="submission" date="2005-08" db="EMBL/GenBank/DDBJ databases">
        <authorList>
            <consortium name="NIH - Mammalian Gene Collection (MGC) project"/>
        </authorList>
    </citation>
    <scope>NUCLEOTIDE SEQUENCE [LARGE SCALE MRNA]</scope>
    <source>
        <strain>Crossbred X Angus</strain>
        <tissue>Ileum</tissue>
    </source>
</reference>
<proteinExistence type="evidence at transcript level"/>
<organism>
    <name type="scientific">Bos taurus</name>
    <name type="common">Bovine</name>
    <dbReference type="NCBI Taxonomy" id="9913"/>
    <lineage>
        <taxon>Eukaryota</taxon>
        <taxon>Metazoa</taxon>
        <taxon>Chordata</taxon>
        <taxon>Craniata</taxon>
        <taxon>Vertebrata</taxon>
        <taxon>Euteleostomi</taxon>
        <taxon>Mammalia</taxon>
        <taxon>Eutheria</taxon>
        <taxon>Laurasiatheria</taxon>
        <taxon>Artiodactyla</taxon>
        <taxon>Ruminantia</taxon>
        <taxon>Pecora</taxon>
        <taxon>Bovidae</taxon>
        <taxon>Bovinae</taxon>
        <taxon>Bos</taxon>
    </lineage>
</organism>
<keyword id="KW-1185">Reference proteome</keyword>
<name>PKHJ1_BOVIN</name>
<accession>Q3ZCI3</accession>
<protein>
    <recommendedName>
        <fullName>Pleckstrin homology domain-containing family J member 1</fullName>
        <shortName>PH domain-containing family J member 1</shortName>
    </recommendedName>
</protein>
<evidence type="ECO:0000255" key="1">
    <source>
        <dbReference type="PROSITE-ProRule" id="PRU00145"/>
    </source>
</evidence>
<feature type="chain" id="PRO_0000309229" description="Pleckstrin homology domain-containing family J member 1">
    <location>
        <begin position="1"/>
        <end position="149"/>
    </location>
</feature>
<feature type="domain" description="PH" evidence="1">
    <location>
        <begin position="15"/>
        <end position="108"/>
    </location>
</feature>
<gene>
    <name type="primary">PLEKHJ1</name>
</gene>
<sequence>MRYNDKELQALSRQPAEMAAELGMRGPKKGSVVKRRLVKLVVNFLFYFRTDEAEPIGALLLEHCRVIHEEPNSFSISFLEDPERKYHFECCSEEQCQQWMAALRQASYEFMRRSLIFYRNEIQKMTGKDPLEQYGISEEARFQLSGLKA</sequence>
<dbReference type="EMBL" id="BC102180">
    <property type="protein sequence ID" value="AAI02181.1"/>
    <property type="molecule type" value="mRNA"/>
</dbReference>
<dbReference type="RefSeq" id="NP_001029741.1">
    <property type="nucleotide sequence ID" value="NM_001034569.2"/>
</dbReference>
<dbReference type="SMR" id="Q3ZCI3"/>
<dbReference type="FunCoup" id="Q3ZCI3">
    <property type="interactions" value="1682"/>
</dbReference>
<dbReference type="STRING" id="9913.ENSBTAP00000002158"/>
<dbReference type="PaxDb" id="9913-ENSBTAP00000002158"/>
<dbReference type="Ensembl" id="ENSBTAT00000002158.4">
    <property type="protein sequence ID" value="ENSBTAP00000002158.3"/>
    <property type="gene ID" value="ENSBTAG00000001647.5"/>
</dbReference>
<dbReference type="GeneID" id="529056"/>
<dbReference type="KEGG" id="bta:529056"/>
<dbReference type="CTD" id="55111"/>
<dbReference type="VEuPathDB" id="HostDB:ENSBTAG00000001647"/>
<dbReference type="VGNC" id="VGNC:33023">
    <property type="gene designation" value="PLEKHJ1"/>
</dbReference>
<dbReference type="eggNOG" id="KOG0017">
    <property type="taxonomic scope" value="Eukaryota"/>
</dbReference>
<dbReference type="GeneTree" id="ENSGT00390000005235"/>
<dbReference type="HOGENOM" id="CLU_141382_0_0_1"/>
<dbReference type="InParanoid" id="Q3ZCI3"/>
<dbReference type="OMA" id="EEQCKEW"/>
<dbReference type="OrthoDB" id="10055808at2759"/>
<dbReference type="TreeFam" id="TF331914"/>
<dbReference type="Proteomes" id="UP000009136">
    <property type="component" value="Chromosome 7"/>
</dbReference>
<dbReference type="Bgee" id="ENSBTAG00000001647">
    <property type="expression patterns" value="Expressed in ileocecal valve and 108 other cell types or tissues"/>
</dbReference>
<dbReference type="GO" id="GO:0005829">
    <property type="term" value="C:cytosol"/>
    <property type="evidence" value="ECO:0007669"/>
    <property type="project" value="GOC"/>
</dbReference>
<dbReference type="GO" id="GO:0005769">
    <property type="term" value="C:early endosome"/>
    <property type="evidence" value="ECO:0000318"/>
    <property type="project" value="GO_Central"/>
</dbReference>
<dbReference type="GO" id="GO:0055037">
    <property type="term" value="C:recycling endosome"/>
    <property type="evidence" value="ECO:0000318"/>
    <property type="project" value="GO_Central"/>
</dbReference>
<dbReference type="GO" id="GO:0005802">
    <property type="term" value="C:trans-Golgi network"/>
    <property type="evidence" value="ECO:0000318"/>
    <property type="project" value="GO_Central"/>
</dbReference>
<dbReference type="GO" id="GO:0007032">
    <property type="term" value="P:endosome organization"/>
    <property type="evidence" value="ECO:0000318"/>
    <property type="project" value="GO_Central"/>
</dbReference>
<dbReference type="GO" id="GO:0001881">
    <property type="term" value="P:receptor recycling"/>
    <property type="evidence" value="ECO:0000318"/>
    <property type="project" value="GO_Central"/>
</dbReference>
<dbReference type="GO" id="GO:0042147">
    <property type="term" value="P:retrograde transport, endosome to Golgi"/>
    <property type="evidence" value="ECO:0000318"/>
    <property type="project" value="GO_Central"/>
</dbReference>
<dbReference type="CDD" id="cd13258">
    <property type="entry name" value="PH_PLEKHJ1"/>
    <property type="match status" value="1"/>
</dbReference>
<dbReference type="FunFam" id="2.30.29.30:FF:000300">
    <property type="entry name" value="pleckstrin homology domain-containing family J member 1"/>
    <property type="match status" value="1"/>
</dbReference>
<dbReference type="Gene3D" id="2.30.29.30">
    <property type="entry name" value="Pleckstrin-homology domain (PH domain)/Phosphotyrosine-binding domain (PTB)"/>
    <property type="match status" value="1"/>
</dbReference>
<dbReference type="InterPro" id="IPR045188">
    <property type="entry name" value="Boi1/Boi2-like"/>
</dbReference>
<dbReference type="InterPro" id="IPR011993">
    <property type="entry name" value="PH-like_dom_sf"/>
</dbReference>
<dbReference type="InterPro" id="IPR001849">
    <property type="entry name" value="PH_domain"/>
</dbReference>
<dbReference type="PANTHER" id="PTHR22902:SF9">
    <property type="entry name" value="PLECKSTRIN HOMOLOGY DOMAIN-CONTAINING FAMILY J MEMBER 1"/>
    <property type="match status" value="1"/>
</dbReference>
<dbReference type="PANTHER" id="PTHR22902">
    <property type="entry name" value="SESQUIPEDALIAN"/>
    <property type="match status" value="1"/>
</dbReference>
<dbReference type="Pfam" id="PF00169">
    <property type="entry name" value="PH"/>
    <property type="match status" value="1"/>
</dbReference>
<dbReference type="SMART" id="SM00233">
    <property type="entry name" value="PH"/>
    <property type="match status" value="1"/>
</dbReference>
<dbReference type="SUPFAM" id="SSF50729">
    <property type="entry name" value="PH domain-like"/>
    <property type="match status" value="1"/>
</dbReference>
<dbReference type="PROSITE" id="PS50003">
    <property type="entry name" value="PH_DOMAIN"/>
    <property type="match status" value="1"/>
</dbReference>